<proteinExistence type="inferred from homology"/>
<evidence type="ECO:0000255" key="1">
    <source>
        <dbReference type="HAMAP-Rule" id="MF_00137"/>
    </source>
</evidence>
<protein>
    <recommendedName>
        <fullName evidence="1">Phosphoribosylaminoimidazole-succinocarboxamide synthase</fullName>
        <ecNumber evidence="1">6.3.2.6</ecNumber>
    </recommendedName>
    <alternativeName>
        <fullName evidence="1">SAICAR synthetase</fullName>
    </alternativeName>
</protein>
<sequence length="237" mass="26973">MQKLAELYRGKAKTVYTTENPDLLVLEFRNDTSALDGQRIEQFDRKGMVNNKFNHFIMAKLEEAGIPTQMESLLSDTEVLVKKLEMIPVECVIRNRAAGSLVKRLGIEEGLELNPPLFDLFLKNDAMHDPMVNESYCKTFGWATEAQLARMKELSYLANDVLSKLFDDAGLILVDFKLEFGLFNGEVVLGDEFSPDGSRLWDKKTLNKMDKDRYRQSLGGLIEAYEEVAHRIGVKLD</sequence>
<accession>A1JL09</accession>
<reference key="1">
    <citation type="journal article" date="2006" name="PLoS Genet.">
        <title>The complete genome sequence and comparative genome analysis of the high pathogenicity Yersinia enterocolitica strain 8081.</title>
        <authorList>
            <person name="Thomson N.R."/>
            <person name="Howard S."/>
            <person name="Wren B.W."/>
            <person name="Holden M.T.G."/>
            <person name="Crossman L."/>
            <person name="Challis G.L."/>
            <person name="Churcher C."/>
            <person name="Mungall K."/>
            <person name="Brooks K."/>
            <person name="Chillingworth T."/>
            <person name="Feltwell T."/>
            <person name="Abdellah Z."/>
            <person name="Hauser H."/>
            <person name="Jagels K."/>
            <person name="Maddison M."/>
            <person name="Moule S."/>
            <person name="Sanders M."/>
            <person name="Whitehead S."/>
            <person name="Quail M.A."/>
            <person name="Dougan G."/>
            <person name="Parkhill J."/>
            <person name="Prentice M.B."/>
        </authorList>
    </citation>
    <scope>NUCLEOTIDE SEQUENCE [LARGE SCALE GENOMIC DNA]</scope>
    <source>
        <strain>NCTC 13174 / 8081</strain>
    </source>
</reference>
<keyword id="KW-0067">ATP-binding</keyword>
<keyword id="KW-0436">Ligase</keyword>
<keyword id="KW-0547">Nucleotide-binding</keyword>
<keyword id="KW-0658">Purine biosynthesis</keyword>
<comment type="catalytic activity">
    <reaction evidence="1">
        <text>5-amino-1-(5-phospho-D-ribosyl)imidazole-4-carboxylate + L-aspartate + ATP = (2S)-2-[5-amino-1-(5-phospho-beta-D-ribosyl)imidazole-4-carboxamido]succinate + ADP + phosphate + 2 H(+)</text>
        <dbReference type="Rhea" id="RHEA:22628"/>
        <dbReference type="ChEBI" id="CHEBI:15378"/>
        <dbReference type="ChEBI" id="CHEBI:29991"/>
        <dbReference type="ChEBI" id="CHEBI:30616"/>
        <dbReference type="ChEBI" id="CHEBI:43474"/>
        <dbReference type="ChEBI" id="CHEBI:58443"/>
        <dbReference type="ChEBI" id="CHEBI:77657"/>
        <dbReference type="ChEBI" id="CHEBI:456216"/>
        <dbReference type="EC" id="6.3.2.6"/>
    </reaction>
</comment>
<comment type="pathway">
    <text evidence="1">Purine metabolism; IMP biosynthesis via de novo pathway; 5-amino-1-(5-phospho-D-ribosyl)imidazole-4-carboxamide from 5-amino-1-(5-phospho-D-ribosyl)imidazole-4-carboxylate: step 1/2.</text>
</comment>
<comment type="similarity">
    <text evidence="1">Belongs to the SAICAR synthetase family.</text>
</comment>
<feature type="chain" id="PRO_1000018814" description="Phosphoribosylaminoimidazole-succinocarboxamide synthase">
    <location>
        <begin position="1"/>
        <end position="237"/>
    </location>
</feature>
<name>PUR7_YERE8</name>
<dbReference type="EC" id="6.3.2.6" evidence="1"/>
<dbReference type="EMBL" id="AM286415">
    <property type="protein sequence ID" value="CAL11234.1"/>
    <property type="molecule type" value="Genomic_DNA"/>
</dbReference>
<dbReference type="RefSeq" id="WP_005162080.1">
    <property type="nucleotide sequence ID" value="NC_008800.1"/>
</dbReference>
<dbReference type="RefSeq" id="YP_001005467.1">
    <property type="nucleotide sequence ID" value="NC_008800.1"/>
</dbReference>
<dbReference type="SMR" id="A1JL09"/>
<dbReference type="GeneID" id="82550271"/>
<dbReference type="KEGG" id="yen:YE1140"/>
<dbReference type="PATRIC" id="fig|393305.7.peg.1242"/>
<dbReference type="eggNOG" id="COG0152">
    <property type="taxonomic scope" value="Bacteria"/>
</dbReference>
<dbReference type="HOGENOM" id="CLU_061495_2_0_6"/>
<dbReference type="OrthoDB" id="9801549at2"/>
<dbReference type="UniPathway" id="UPA00074">
    <property type="reaction ID" value="UER00131"/>
</dbReference>
<dbReference type="Proteomes" id="UP000000642">
    <property type="component" value="Chromosome"/>
</dbReference>
<dbReference type="GO" id="GO:0005829">
    <property type="term" value="C:cytosol"/>
    <property type="evidence" value="ECO:0007669"/>
    <property type="project" value="TreeGrafter"/>
</dbReference>
<dbReference type="GO" id="GO:0005524">
    <property type="term" value="F:ATP binding"/>
    <property type="evidence" value="ECO:0007669"/>
    <property type="project" value="UniProtKB-KW"/>
</dbReference>
<dbReference type="GO" id="GO:0004639">
    <property type="term" value="F:phosphoribosylaminoimidazolesuccinocarboxamide synthase activity"/>
    <property type="evidence" value="ECO:0007669"/>
    <property type="project" value="UniProtKB-UniRule"/>
</dbReference>
<dbReference type="GO" id="GO:0006189">
    <property type="term" value="P:'de novo' IMP biosynthetic process"/>
    <property type="evidence" value="ECO:0007669"/>
    <property type="project" value="UniProtKB-UniRule"/>
</dbReference>
<dbReference type="GO" id="GO:0009236">
    <property type="term" value="P:cobalamin biosynthetic process"/>
    <property type="evidence" value="ECO:0007669"/>
    <property type="project" value="InterPro"/>
</dbReference>
<dbReference type="CDD" id="cd01415">
    <property type="entry name" value="SAICAR_synt_PurC"/>
    <property type="match status" value="1"/>
</dbReference>
<dbReference type="FunFam" id="3.30.200.20:FF:000086">
    <property type="entry name" value="Phosphoribosylaminoimidazole-succinocarboxamide synthase"/>
    <property type="match status" value="1"/>
</dbReference>
<dbReference type="FunFam" id="3.30.470.20:FF:000006">
    <property type="entry name" value="Phosphoribosylaminoimidazole-succinocarboxamide synthase"/>
    <property type="match status" value="1"/>
</dbReference>
<dbReference type="Gene3D" id="3.30.470.20">
    <property type="entry name" value="ATP-grasp fold, B domain"/>
    <property type="match status" value="1"/>
</dbReference>
<dbReference type="Gene3D" id="3.30.200.20">
    <property type="entry name" value="Phosphorylase Kinase, domain 1"/>
    <property type="match status" value="1"/>
</dbReference>
<dbReference type="HAMAP" id="MF_00137">
    <property type="entry name" value="SAICAR_synth"/>
    <property type="match status" value="1"/>
</dbReference>
<dbReference type="InterPro" id="IPR028923">
    <property type="entry name" value="SAICAR_synt/ADE2_N"/>
</dbReference>
<dbReference type="InterPro" id="IPR033934">
    <property type="entry name" value="SAICAR_synt_PurC"/>
</dbReference>
<dbReference type="InterPro" id="IPR001636">
    <property type="entry name" value="SAICAR_synth"/>
</dbReference>
<dbReference type="InterPro" id="IPR050089">
    <property type="entry name" value="SAICAR_synthetase"/>
</dbReference>
<dbReference type="InterPro" id="IPR018236">
    <property type="entry name" value="SAICAR_synthetase_CS"/>
</dbReference>
<dbReference type="NCBIfam" id="TIGR00081">
    <property type="entry name" value="purC"/>
    <property type="match status" value="1"/>
</dbReference>
<dbReference type="PANTHER" id="PTHR43599">
    <property type="entry name" value="MULTIFUNCTIONAL PROTEIN ADE2"/>
    <property type="match status" value="1"/>
</dbReference>
<dbReference type="PANTHER" id="PTHR43599:SF3">
    <property type="entry name" value="SI:DKEY-6E2.2"/>
    <property type="match status" value="1"/>
</dbReference>
<dbReference type="Pfam" id="PF01259">
    <property type="entry name" value="SAICAR_synt"/>
    <property type="match status" value="1"/>
</dbReference>
<dbReference type="SUPFAM" id="SSF56104">
    <property type="entry name" value="SAICAR synthase-like"/>
    <property type="match status" value="1"/>
</dbReference>
<dbReference type="PROSITE" id="PS01057">
    <property type="entry name" value="SAICAR_SYNTHETASE_1"/>
    <property type="match status" value="1"/>
</dbReference>
<dbReference type="PROSITE" id="PS01058">
    <property type="entry name" value="SAICAR_SYNTHETASE_2"/>
    <property type="match status" value="1"/>
</dbReference>
<organism>
    <name type="scientific">Yersinia enterocolitica serotype O:8 / biotype 1B (strain NCTC 13174 / 8081)</name>
    <dbReference type="NCBI Taxonomy" id="393305"/>
    <lineage>
        <taxon>Bacteria</taxon>
        <taxon>Pseudomonadati</taxon>
        <taxon>Pseudomonadota</taxon>
        <taxon>Gammaproteobacteria</taxon>
        <taxon>Enterobacterales</taxon>
        <taxon>Yersiniaceae</taxon>
        <taxon>Yersinia</taxon>
    </lineage>
</organism>
<gene>
    <name evidence="1" type="primary">purC</name>
    <name type="ordered locus">YE1140</name>
</gene>